<name>TRPC_ALBFT</name>
<evidence type="ECO:0000255" key="1">
    <source>
        <dbReference type="HAMAP-Rule" id="MF_00134"/>
    </source>
</evidence>
<keyword id="KW-0028">Amino-acid biosynthesis</keyword>
<keyword id="KW-0057">Aromatic amino acid biosynthesis</keyword>
<keyword id="KW-0210">Decarboxylase</keyword>
<keyword id="KW-0456">Lyase</keyword>
<keyword id="KW-1185">Reference proteome</keyword>
<keyword id="KW-0822">Tryptophan biosynthesis</keyword>
<dbReference type="EC" id="4.1.1.48" evidence="1"/>
<dbReference type="EMBL" id="CP000267">
    <property type="protein sequence ID" value="ABD71305.1"/>
    <property type="molecule type" value="Genomic_DNA"/>
</dbReference>
<dbReference type="RefSeq" id="WP_011465868.1">
    <property type="nucleotide sequence ID" value="NC_007908.1"/>
</dbReference>
<dbReference type="SMR" id="Q21SE8"/>
<dbReference type="STRING" id="338969.Rfer_3601"/>
<dbReference type="KEGG" id="rfr:Rfer_3601"/>
<dbReference type="eggNOG" id="COG0134">
    <property type="taxonomic scope" value="Bacteria"/>
</dbReference>
<dbReference type="HOGENOM" id="CLU_034247_2_0_4"/>
<dbReference type="OrthoDB" id="9804217at2"/>
<dbReference type="UniPathway" id="UPA00035">
    <property type="reaction ID" value="UER00043"/>
</dbReference>
<dbReference type="Proteomes" id="UP000008332">
    <property type="component" value="Chromosome"/>
</dbReference>
<dbReference type="GO" id="GO:0004425">
    <property type="term" value="F:indole-3-glycerol-phosphate synthase activity"/>
    <property type="evidence" value="ECO:0007669"/>
    <property type="project" value="UniProtKB-UniRule"/>
</dbReference>
<dbReference type="GO" id="GO:0004640">
    <property type="term" value="F:phosphoribosylanthranilate isomerase activity"/>
    <property type="evidence" value="ECO:0007669"/>
    <property type="project" value="TreeGrafter"/>
</dbReference>
<dbReference type="GO" id="GO:0000162">
    <property type="term" value="P:L-tryptophan biosynthetic process"/>
    <property type="evidence" value="ECO:0007669"/>
    <property type="project" value="UniProtKB-UniRule"/>
</dbReference>
<dbReference type="CDD" id="cd00331">
    <property type="entry name" value="IGPS"/>
    <property type="match status" value="1"/>
</dbReference>
<dbReference type="FunFam" id="3.20.20.70:FF:000024">
    <property type="entry name" value="Indole-3-glycerol phosphate synthase"/>
    <property type="match status" value="1"/>
</dbReference>
<dbReference type="Gene3D" id="3.20.20.70">
    <property type="entry name" value="Aldolase class I"/>
    <property type="match status" value="1"/>
</dbReference>
<dbReference type="HAMAP" id="MF_00134_B">
    <property type="entry name" value="IGPS_B"/>
    <property type="match status" value="1"/>
</dbReference>
<dbReference type="InterPro" id="IPR013785">
    <property type="entry name" value="Aldolase_TIM"/>
</dbReference>
<dbReference type="InterPro" id="IPR045186">
    <property type="entry name" value="Indole-3-glycerol_P_synth"/>
</dbReference>
<dbReference type="InterPro" id="IPR013798">
    <property type="entry name" value="Indole-3-glycerol_P_synth_dom"/>
</dbReference>
<dbReference type="InterPro" id="IPR001468">
    <property type="entry name" value="Indole-3-GlycerolPSynthase_CS"/>
</dbReference>
<dbReference type="InterPro" id="IPR011060">
    <property type="entry name" value="RibuloseP-bd_barrel"/>
</dbReference>
<dbReference type="NCBIfam" id="NF001370">
    <property type="entry name" value="PRK00278.1-2"/>
    <property type="match status" value="1"/>
</dbReference>
<dbReference type="NCBIfam" id="NF001373">
    <property type="entry name" value="PRK00278.1-6"/>
    <property type="match status" value="1"/>
</dbReference>
<dbReference type="NCBIfam" id="NF001377">
    <property type="entry name" value="PRK00278.2-4"/>
    <property type="match status" value="1"/>
</dbReference>
<dbReference type="PANTHER" id="PTHR22854:SF2">
    <property type="entry name" value="INDOLE-3-GLYCEROL-PHOSPHATE SYNTHASE"/>
    <property type="match status" value="1"/>
</dbReference>
<dbReference type="PANTHER" id="PTHR22854">
    <property type="entry name" value="TRYPTOPHAN BIOSYNTHESIS PROTEIN"/>
    <property type="match status" value="1"/>
</dbReference>
<dbReference type="Pfam" id="PF00218">
    <property type="entry name" value="IGPS"/>
    <property type="match status" value="1"/>
</dbReference>
<dbReference type="SUPFAM" id="SSF51366">
    <property type="entry name" value="Ribulose-phoshate binding barrel"/>
    <property type="match status" value="1"/>
</dbReference>
<dbReference type="PROSITE" id="PS00614">
    <property type="entry name" value="IGPS"/>
    <property type="match status" value="1"/>
</dbReference>
<organism>
    <name type="scientific">Albidiferax ferrireducens (strain ATCC BAA-621 / DSM 15236 / T118)</name>
    <name type="common">Rhodoferax ferrireducens</name>
    <dbReference type="NCBI Taxonomy" id="338969"/>
    <lineage>
        <taxon>Bacteria</taxon>
        <taxon>Pseudomonadati</taxon>
        <taxon>Pseudomonadota</taxon>
        <taxon>Betaproteobacteria</taxon>
        <taxon>Burkholderiales</taxon>
        <taxon>Comamonadaceae</taxon>
        <taxon>Rhodoferax</taxon>
    </lineage>
</organism>
<reference key="1">
    <citation type="submission" date="2006-02" db="EMBL/GenBank/DDBJ databases">
        <title>Complete sequence of chromosome of Rhodoferax ferrireducens DSM 15236.</title>
        <authorList>
            <person name="Copeland A."/>
            <person name="Lucas S."/>
            <person name="Lapidus A."/>
            <person name="Barry K."/>
            <person name="Detter J.C."/>
            <person name="Glavina del Rio T."/>
            <person name="Hammon N."/>
            <person name="Israni S."/>
            <person name="Pitluck S."/>
            <person name="Brettin T."/>
            <person name="Bruce D."/>
            <person name="Han C."/>
            <person name="Tapia R."/>
            <person name="Gilna P."/>
            <person name="Kiss H."/>
            <person name="Schmutz J."/>
            <person name="Larimer F."/>
            <person name="Land M."/>
            <person name="Kyrpides N."/>
            <person name="Ivanova N."/>
            <person name="Richardson P."/>
        </authorList>
    </citation>
    <scope>NUCLEOTIDE SEQUENCE [LARGE SCALE GENOMIC DNA]</scope>
    <source>
        <strain>ATCC BAA-621 / DSM 15236 / T118</strain>
    </source>
</reference>
<protein>
    <recommendedName>
        <fullName evidence="1">Indole-3-glycerol phosphate synthase</fullName>
        <shortName evidence="1">IGPS</shortName>
        <ecNumber evidence="1">4.1.1.48</ecNumber>
    </recommendedName>
</protein>
<feature type="chain" id="PRO_1000018542" description="Indole-3-glycerol phosphate synthase">
    <location>
        <begin position="1"/>
        <end position="264"/>
    </location>
</feature>
<gene>
    <name evidence="1" type="primary">trpC</name>
    <name type="ordered locus">Rfer_3601</name>
</gene>
<proteinExistence type="inferred from homology"/>
<accession>Q21SE8</accession>
<comment type="catalytic activity">
    <reaction evidence="1">
        <text>1-(2-carboxyphenylamino)-1-deoxy-D-ribulose 5-phosphate + H(+) = (1S,2R)-1-C-(indol-3-yl)glycerol 3-phosphate + CO2 + H2O</text>
        <dbReference type="Rhea" id="RHEA:23476"/>
        <dbReference type="ChEBI" id="CHEBI:15377"/>
        <dbReference type="ChEBI" id="CHEBI:15378"/>
        <dbReference type="ChEBI" id="CHEBI:16526"/>
        <dbReference type="ChEBI" id="CHEBI:58613"/>
        <dbReference type="ChEBI" id="CHEBI:58866"/>
        <dbReference type="EC" id="4.1.1.48"/>
    </reaction>
</comment>
<comment type="pathway">
    <text evidence="1">Amino-acid biosynthesis; L-tryptophan biosynthesis; L-tryptophan from chorismate: step 4/5.</text>
</comment>
<comment type="similarity">
    <text evidence="1">Belongs to the TrpC family.</text>
</comment>
<sequence>MTDILEKIVAVKRQEIAAAIARKPLTAMRADAESRVLTRDFVAALRGKIAAGQPAVIAEIKKSSPSKGVLREDFIPADIAQSYAEHGAACLSVLTDLQFFRGCIDYLKQARASCPLPVLRKDFMLDAYQIYESRACGADAVLLIAAILDDAQMKDLEAIARSLDMAVLVEVHDAPELARALQLKTPLIGINNRNLKTFEVSLDTTLTLMRELPADRLLVCESGIHTRDDVLRMGAAGVNAFLVGEAFMRAPDPGLALAELFATA</sequence>